<name>PYRE_METAR</name>
<feature type="chain" id="PRO_0000298892" description="Orotate phosphoribosyltransferase">
    <location>
        <begin position="1"/>
        <end position="175"/>
    </location>
</feature>
<feature type="binding site" evidence="1">
    <location>
        <position position="88"/>
    </location>
    <ligand>
        <name>5-phospho-alpha-D-ribose 1-diphosphate</name>
        <dbReference type="ChEBI" id="CHEBI:58017"/>
        <note>ligand shared between dimeric partners</note>
    </ligand>
</feature>
<feature type="binding site" description="in other chain" evidence="1">
    <location>
        <position position="89"/>
    </location>
    <ligand>
        <name>5-phospho-alpha-D-ribose 1-diphosphate</name>
        <dbReference type="ChEBI" id="CHEBI:58017"/>
        <note>ligand shared between dimeric partners</note>
    </ligand>
</feature>
<feature type="binding site" evidence="1">
    <location>
        <position position="92"/>
    </location>
    <ligand>
        <name>5-phospho-alpha-D-ribose 1-diphosphate</name>
        <dbReference type="ChEBI" id="CHEBI:58017"/>
        <note>ligand shared between dimeric partners</note>
    </ligand>
</feature>
<feature type="binding site" description="in other chain" evidence="1">
    <location>
        <begin position="114"/>
        <end position="122"/>
    </location>
    <ligand>
        <name>5-phospho-alpha-D-ribose 1-diphosphate</name>
        <dbReference type="ChEBI" id="CHEBI:58017"/>
        <note>ligand shared between dimeric partners</note>
    </ligand>
</feature>
<feature type="binding site" evidence="1">
    <location>
        <position position="118"/>
    </location>
    <ligand>
        <name>orotate</name>
        <dbReference type="ChEBI" id="CHEBI:30839"/>
    </ligand>
</feature>
<feature type="binding site" evidence="1">
    <location>
        <position position="146"/>
    </location>
    <ligand>
        <name>orotate</name>
        <dbReference type="ChEBI" id="CHEBI:30839"/>
    </ligand>
</feature>
<sequence>MDTELVEMLKQTGAVKFGDFTLSSGRKSTYYVDKYIFETNPVCLSVIGDRIAKLIPAGTRRLAGIEIGSIPLAAVASVKSGMPFVVVRKATKGYGTNKLIEGVWQKGEKVFVVEDVVTTARGALGAIHTLREAGLAVDEMVCVVDREEGGRESLEQEGVKVRSLVKSSELLGYKP</sequence>
<accession>Q0W6Q2</accession>
<organism>
    <name type="scientific">Methanocella arvoryzae (strain DSM 22066 / NBRC 105507 / MRE50)</name>
    <dbReference type="NCBI Taxonomy" id="351160"/>
    <lineage>
        <taxon>Archaea</taxon>
        <taxon>Methanobacteriati</taxon>
        <taxon>Methanobacteriota</taxon>
        <taxon>Stenosarchaea group</taxon>
        <taxon>Methanomicrobia</taxon>
        <taxon>Methanocellales</taxon>
        <taxon>Methanocellaceae</taxon>
        <taxon>Methanocella</taxon>
    </lineage>
</organism>
<dbReference type="EC" id="2.4.2.10" evidence="1"/>
<dbReference type="EMBL" id="AM114193">
    <property type="protein sequence ID" value="CAJ35941.1"/>
    <property type="molecule type" value="Genomic_DNA"/>
</dbReference>
<dbReference type="RefSeq" id="WP_012036564.1">
    <property type="nucleotide sequence ID" value="NC_009464.1"/>
</dbReference>
<dbReference type="SMR" id="Q0W6Q2"/>
<dbReference type="STRING" id="351160.RCIX518"/>
<dbReference type="GeneID" id="5144568"/>
<dbReference type="KEGG" id="rci:RCIX518"/>
<dbReference type="PATRIC" id="fig|351160.9.peg.2295"/>
<dbReference type="eggNOG" id="arCOG00029">
    <property type="taxonomic scope" value="Archaea"/>
</dbReference>
<dbReference type="OrthoDB" id="9089at2157"/>
<dbReference type="UniPathway" id="UPA00070">
    <property type="reaction ID" value="UER00119"/>
</dbReference>
<dbReference type="Proteomes" id="UP000000663">
    <property type="component" value="Chromosome"/>
</dbReference>
<dbReference type="GO" id="GO:0000287">
    <property type="term" value="F:magnesium ion binding"/>
    <property type="evidence" value="ECO:0007669"/>
    <property type="project" value="UniProtKB-UniRule"/>
</dbReference>
<dbReference type="GO" id="GO:0004588">
    <property type="term" value="F:orotate phosphoribosyltransferase activity"/>
    <property type="evidence" value="ECO:0007669"/>
    <property type="project" value="UniProtKB-UniRule"/>
</dbReference>
<dbReference type="GO" id="GO:0044205">
    <property type="term" value="P:'de novo' UMP biosynthetic process"/>
    <property type="evidence" value="ECO:0007669"/>
    <property type="project" value="UniProtKB-UniRule"/>
</dbReference>
<dbReference type="GO" id="GO:0019856">
    <property type="term" value="P:pyrimidine nucleobase biosynthetic process"/>
    <property type="evidence" value="ECO:0007669"/>
    <property type="project" value="TreeGrafter"/>
</dbReference>
<dbReference type="CDD" id="cd06223">
    <property type="entry name" value="PRTases_typeI"/>
    <property type="match status" value="1"/>
</dbReference>
<dbReference type="Gene3D" id="3.40.50.2020">
    <property type="match status" value="1"/>
</dbReference>
<dbReference type="HAMAP" id="MF_01208">
    <property type="entry name" value="PyrE"/>
    <property type="match status" value="1"/>
</dbReference>
<dbReference type="InterPro" id="IPR023031">
    <property type="entry name" value="OPRT"/>
</dbReference>
<dbReference type="InterPro" id="IPR004467">
    <property type="entry name" value="Or_phspho_trans_dom"/>
</dbReference>
<dbReference type="InterPro" id="IPR000836">
    <property type="entry name" value="PRibTrfase_dom"/>
</dbReference>
<dbReference type="InterPro" id="IPR029057">
    <property type="entry name" value="PRTase-like"/>
</dbReference>
<dbReference type="NCBIfam" id="TIGR00336">
    <property type="entry name" value="pyrE"/>
    <property type="match status" value="1"/>
</dbReference>
<dbReference type="PANTHER" id="PTHR19278">
    <property type="entry name" value="OROTATE PHOSPHORIBOSYLTRANSFERASE"/>
    <property type="match status" value="1"/>
</dbReference>
<dbReference type="PANTHER" id="PTHR19278:SF9">
    <property type="entry name" value="URIDINE 5'-MONOPHOSPHATE SYNTHASE"/>
    <property type="match status" value="1"/>
</dbReference>
<dbReference type="SUPFAM" id="SSF53271">
    <property type="entry name" value="PRTase-like"/>
    <property type="match status" value="1"/>
</dbReference>
<proteinExistence type="inferred from homology"/>
<protein>
    <recommendedName>
        <fullName evidence="1">Orotate phosphoribosyltransferase</fullName>
        <shortName evidence="1">OPRT</shortName>
        <shortName evidence="1">OPRTase</shortName>
        <ecNumber evidence="1">2.4.2.10</ecNumber>
    </recommendedName>
</protein>
<keyword id="KW-0328">Glycosyltransferase</keyword>
<keyword id="KW-0460">Magnesium</keyword>
<keyword id="KW-0665">Pyrimidine biosynthesis</keyword>
<keyword id="KW-1185">Reference proteome</keyword>
<keyword id="KW-0808">Transferase</keyword>
<gene>
    <name evidence="1" type="primary">pyrE</name>
    <name type="synonym">pyrE-1</name>
    <name type="ordered locus">UNCMA_22440</name>
    <name type="ORF">RCIX518</name>
</gene>
<comment type="function">
    <text evidence="1">Catalyzes the transfer of a ribosyl phosphate group from 5-phosphoribose 1-diphosphate to orotate, leading to the formation of orotidine monophosphate (OMP).</text>
</comment>
<comment type="catalytic activity">
    <reaction evidence="1">
        <text>orotidine 5'-phosphate + diphosphate = orotate + 5-phospho-alpha-D-ribose 1-diphosphate</text>
        <dbReference type="Rhea" id="RHEA:10380"/>
        <dbReference type="ChEBI" id="CHEBI:30839"/>
        <dbReference type="ChEBI" id="CHEBI:33019"/>
        <dbReference type="ChEBI" id="CHEBI:57538"/>
        <dbReference type="ChEBI" id="CHEBI:58017"/>
        <dbReference type="EC" id="2.4.2.10"/>
    </reaction>
</comment>
<comment type="cofactor">
    <cofactor evidence="1">
        <name>Mg(2+)</name>
        <dbReference type="ChEBI" id="CHEBI:18420"/>
    </cofactor>
</comment>
<comment type="pathway">
    <text evidence="1">Pyrimidine metabolism; UMP biosynthesis via de novo pathway; UMP from orotate: step 1/2.</text>
</comment>
<comment type="subunit">
    <text evidence="1">Homodimer.</text>
</comment>
<comment type="similarity">
    <text evidence="1">Belongs to the purine/pyrimidine phosphoribosyltransferase family. PyrE subfamily.</text>
</comment>
<reference key="1">
    <citation type="journal article" date="2006" name="Science">
        <title>Genome of rice cluster I archaea -- the key methane producers in the rice rhizosphere.</title>
        <authorList>
            <person name="Erkel C."/>
            <person name="Kube M."/>
            <person name="Reinhardt R."/>
            <person name="Liesack W."/>
        </authorList>
    </citation>
    <scope>NUCLEOTIDE SEQUENCE [LARGE SCALE GENOMIC DNA]</scope>
    <source>
        <strain>DSM 22066 / NBRC 105507 / MRE50</strain>
    </source>
</reference>
<evidence type="ECO:0000255" key="1">
    <source>
        <dbReference type="HAMAP-Rule" id="MF_01208"/>
    </source>
</evidence>